<gene>
    <name evidence="16 17" type="primary">lst-4</name>
    <name type="ORF">Y37A1B.2</name>
</gene>
<reference evidence="15 16" key="1">
    <citation type="journal article" date="1998" name="Science">
        <title>Genome sequence of the nematode C. elegans: a platform for investigating biology.</title>
        <authorList>
            <consortium name="The C. elegans sequencing consortium"/>
        </authorList>
    </citation>
    <scope>NUCLEOTIDE SEQUENCE [LARGE SCALE GENOMIC DNA]</scope>
    <scope>ALTERNATIVE SPLICING</scope>
    <source>
        <strain evidence="16">Bristol N2</strain>
    </source>
</reference>
<reference evidence="15" key="2">
    <citation type="journal article" date="2004" name="Science">
        <title>Crosstalk between the EGFR and LIN-12/Notch pathways in C. elegans vulval development.</title>
        <authorList>
            <person name="Yoo A.S."/>
            <person name="Bais C."/>
            <person name="Greenwald I."/>
        </authorList>
    </citation>
    <scope>FUNCTION</scope>
    <scope>TISSUE SPECIFICITY</scope>
    <scope>DEVELOPMENTAL STAGE</scope>
    <scope>DISRUPTION PHENOTYPE</scope>
</reference>
<reference evidence="15" key="3">
    <citation type="journal article" date="2008" name="Nat. Cell Biol.">
        <title>A pathway for phagosome maturation during engulfment of apoptotic cells.</title>
        <authorList>
            <person name="Kinchen J.M."/>
            <person name="Doukoumetzidis K."/>
            <person name="Almendinger J."/>
            <person name="Stergiou L."/>
            <person name="Tosello-Trampont A."/>
            <person name="Sifri C.D."/>
            <person name="Hengartner M.O."/>
            <person name="Ravichandran K.S."/>
        </authorList>
    </citation>
    <scope>FUNCTION</scope>
</reference>
<reference evidence="15" key="4">
    <citation type="journal article" date="2011" name="Mol. Biol. Cell">
        <title>Three sorting nexins drive the degradation of apoptotic cells in response to PtdIns(3)P signaling.</title>
        <authorList>
            <person name="Lu N."/>
            <person name="Shen Q."/>
            <person name="Mahoney T.R."/>
            <person name="Liu X."/>
            <person name="Zhou Z."/>
        </authorList>
    </citation>
    <scope>FUNCTION</scope>
    <scope>SUBCELLULAR LOCATION</scope>
    <scope>INTERACTION WITH DYN-1</scope>
    <scope>DOMAIN</scope>
    <scope>DISRUPTION PHENOTYPE</scope>
    <scope>MUTAGENESIS OF ARG-265; LYS-494 AND ARG-501</scope>
</reference>
<reference evidence="15" key="5">
    <citation type="journal article" date="2011" name="PLoS ONE">
        <title>A conserved role for SNX9-family members in the regulation of phagosome maturation during engulfment of apoptotic cells.</title>
        <authorList>
            <person name="Almendinger J."/>
            <person name="Doukoumetzidis K."/>
            <person name="Kinchen J.M."/>
            <person name="Kaech A."/>
            <person name="Ravichandran K.S."/>
            <person name="Hengartner M.O."/>
        </authorList>
    </citation>
    <scope>FUNCTION</scope>
    <scope>SUBCELLULAR LOCATION</scope>
    <scope>TISSUE SPECIFICITY</scope>
    <scope>DOMAIN</scope>
    <scope>DISRUPTION PHENOTYPE</scope>
    <scope>MUTAGENESIS OF 265-ARG--LYS-267</scope>
</reference>
<reference evidence="15" key="6">
    <citation type="journal article" date="2012" name="PLoS Biol.">
        <title>Two PI 3-kinases and one PI 3-phosphatase together establish the cyclic waves of phagosomal PtdIns(3)P critical for the degradation of apoptotic cells.</title>
        <authorList>
            <person name="Lu N."/>
            <person name="Shen Q."/>
            <person name="Mahoney T.R."/>
            <person name="Neukomm L.J."/>
            <person name="Wang Y."/>
            <person name="Zhou Z."/>
        </authorList>
    </citation>
    <scope>SUBCELLULAR LOCATION</scope>
</reference>
<name>LST4_CAEEL</name>
<evidence type="ECO:0000250" key="1">
    <source>
        <dbReference type="UniProtKB" id="Q8WV41"/>
    </source>
</evidence>
<evidence type="ECO:0000255" key="2"/>
<evidence type="ECO:0000255" key="3">
    <source>
        <dbReference type="PROSITE-ProRule" id="PRU00147"/>
    </source>
</evidence>
<evidence type="ECO:0000255" key="4">
    <source>
        <dbReference type="PROSITE-ProRule" id="PRU00192"/>
    </source>
</evidence>
<evidence type="ECO:0000256" key="5">
    <source>
        <dbReference type="SAM" id="MobiDB-lite"/>
    </source>
</evidence>
<evidence type="ECO:0000269" key="6">
    <source>
    </source>
</evidence>
<evidence type="ECO:0000269" key="7">
    <source>
    </source>
</evidence>
<evidence type="ECO:0000269" key="8">
    <source>
    </source>
</evidence>
<evidence type="ECO:0000269" key="9">
    <source>
    </source>
</evidence>
<evidence type="ECO:0000269" key="10">
    <source>
    </source>
</evidence>
<evidence type="ECO:0000269" key="11">
    <source>
    </source>
</evidence>
<evidence type="ECO:0000303" key="12">
    <source>
    </source>
</evidence>
<evidence type="ECO:0000303" key="13">
    <source>
    </source>
</evidence>
<evidence type="ECO:0000303" key="14">
    <source>
    </source>
</evidence>
<evidence type="ECO:0000305" key="15"/>
<evidence type="ECO:0000312" key="16">
    <source>
        <dbReference type="EMBL" id="CAA19487.2"/>
    </source>
</evidence>
<evidence type="ECO:0000312" key="17">
    <source>
        <dbReference type="WormBase" id="Y37A1B.2a"/>
    </source>
</evidence>
<protein>
    <recommendedName>
        <fullName evidence="1">Sorting nexin lst-4</fullName>
    </recommendedName>
    <alternativeName>
        <fullName evidence="12 13">Lateral signaling target protein 4</fullName>
    </alternativeName>
</protein>
<sequence length="566" mass="64329">MAQVKAEYDFQSQPNTGELSISAGEVLTVIRENIDGGWIEGRNVRGSVGLFPESYVTPYQASRPPPVLPPPLPPTSSGPPAASSRPFDDWGGASEVAAPPSYGAQHHHQPTPSVPEVTRSSYPSQNDDFDDEWTDEDDEQEPTRPNVQSSIGSNSRRDLSRSHSEHGGPDRGSNKVNKNINRFSNFVKSGVEAYVIGESKTTSQISERHEVVMNNGIIQWKPIQQYYTCIVDKPKKESKLKGLKSFIAYSITSSLTNIQRQVSRRYKHFDWLHEQLSAKYVLIPIPPLPEKQVAGRYEEDLIDHRKHILQLWVNKICRHPVLSQSEVWLHFISCTDEKDWKNGKRRAEKDEYIGGAFLNCITVPHQPLDPNNVDMQVERFQRSVKTSEEAMRVMQERMNMFQKVFAGPVKQNWQKMGSAFKTLQQSFEIDETVASRRLTEALAYTASEYHEIGQVFDAHTKNDMEPVLENLYSYKGTVQNVPDIIQVHKQAVQKFRDSEGRLSSAEAEKMKQRIDAMSYTVIAEVQHQTAEKVEDMKSTMGTYLKKQAMFYQEVATKLTSLAARYD</sequence>
<keyword id="KW-0025">Alternative splicing</keyword>
<keyword id="KW-0963">Cytoplasm</keyword>
<keyword id="KW-0968">Cytoplasmic vesicle</keyword>
<keyword id="KW-0446">Lipid-binding</keyword>
<keyword id="KW-0472">Membrane</keyword>
<keyword id="KW-1185">Reference proteome</keyword>
<keyword id="KW-0728">SH3 domain</keyword>
<comment type="function">
    <text evidence="6 7 8 9">Involved in the signaling of vulval development by acting as a negative regulator of epidermal growth factor receptor (EGFR) signaling. Aids in phagosomal membrane tubule formation which is required for phagosomal fusion with endosomes and lysosomes. Also recruits rab-7 to phagosomes by an interaction with dyn-1. These are events leading to phagosome maturation which is a step in apoptotic cell corpse clearance. Binds phosphatidylinositol-3,4,5-trisphosphate.</text>
</comment>
<comment type="subunit">
    <text evidence="8">Homodimer. Isoform d interacts (via SH3 domain) with dyn-1.</text>
</comment>
<comment type="interaction">
    <interactant intactId="EBI-4325777">
        <id>Q8I4E2</id>
    </interactant>
    <interactant intactId="EBI-317945">
        <id>P39055</id>
        <label>dyn-1</label>
    </interactant>
    <organismsDiffer>false</organismsDiffer>
    <experiments>4</experiments>
</comment>
<comment type="subcellular location">
    <subcellularLocation>
        <location evidence="8 9 10">Cytoplasm</location>
    </subcellularLocation>
    <subcellularLocation>
        <location evidence="8 9 10">Cytoplasmic vesicle</location>
        <location evidence="8 9 10">Phagosome membrane</location>
    </subcellularLocation>
    <text evidence="8 9 10">Recruited to phagosomal surface by phosphatidylinositol trisphosphate. BAR and PX domains are required for the phagosomal localization.</text>
</comment>
<comment type="alternative products">
    <event type="alternative splicing"/>
    <isoform>
        <id>Q8I4E2-1</id>
        <name evidence="11">c</name>
        <sequence type="displayed"/>
    </isoform>
    <isoform>
        <id>Q8I4E2-2</id>
        <name evidence="11">a</name>
        <sequence type="described" ref="VSP_046632 VSP_046633"/>
    </isoform>
    <isoform>
        <id>Q8I4E2-3</id>
        <name evidence="11">b</name>
        <sequence type="described" ref="VSP_046629"/>
    </isoform>
    <isoform>
        <id>Q8I4E2-4</id>
        <name evidence="11">d</name>
        <sequence type="described" ref="VSP_046634"/>
    </isoform>
    <isoform>
        <id>Q8I4E2-5</id>
        <name evidence="11">e</name>
        <sequence type="described" ref="VSP_046628"/>
    </isoform>
    <isoform>
        <id>Q8I4E2-6</id>
        <name evidence="11">f</name>
        <sequence type="described" ref="VSP_046630 VSP_046631"/>
    </isoform>
</comment>
<comment type="tissue specificity">
    <text evidence="6 9">Expressed in vulval precursor cells (VPCs) and apoptotic germ cells. Colocalizes with actin, dyn-1 and rab-5 in early phagosomes.</text>
</comment>
<comment type="developmental stage">
    <text evidence="6">Highly expressed in all 6 vulval precursor cells (VPCs). At the time of inductive signaling, expression forms a gradient in response to inductive signal: expression is low in P6.p, intermediate in P5.p and P7.p and undiminished in P3.p, P4.p, and P8.p. Later, expression becomes strong again in P5.p and P7.p.</text>
</comment>
<comment type="domain">
    <text evidence="8">The BAR and PX domains are required for recruitment to the phagosome.</text>
</comment>
<comment type="domain">
    <text evidence="9">The SH3 domain is involved in phagosome maturation.</text>
</comment>
<comment type="disruption phenotype">
    <text evidence="6 8 9">Aberrant vulval development, ectopic vulval induction, retained cell corpses and defective recruitment of dyn-1 and rab-7 to phagosomal surfaces.</text>
</comment>
<comment type="similarity">
    <text evidence="2">Belongs to the sorting nexin family.</text>
</comment>
<feature type="chain" id="PRO_0000422772" description="Sorting nexin lst-4">
    <location>
        <begin position="1"/>
        <end position="566"/>
    </location>
</feature>
<feature type="domain" description="SH3" evidence="4">
    <location>
        <begin position="1"/>
        <end position="61"/>
    </location>
</feature>
<feature type="domain" description="PX" evidence="3">
    <location>
        <begin position="227"/>
        <end position="339"/>
    </location>
</feature>
<feature type="domain" description="BAR" evidence="2">
    <location>
        <begin position="362"/>
        <end position="566"/>
    </location>
</feature>
<feature type="region of interest" description="Disordered" evidence="5">
    <location>
        <begin position="59"/>
        <end position="179"/>
    </location>
</feature>
<feature type="compositionally biased region" description="Pro residues" evidence="5">
    <location>
        <begin position="63"/>
        <end position="77"/>
    </location>
</feature>
<feature type="compositionally biased region" description="Acidic residues" evidence="5">
    <location>
        <begin position="127"/>
        <end position="140"/>
    </location>
</feature>
<feature type="compositionally biased region" description="Polar residues" evidence="5">
    <location>
        <begin position="143"/>
        <end position="154"/>
    </location>
</feature>
<feature type="compositionally biased region" description="Basic and acidic residues" evidence="5">
    <location>
        <begin position="155"/>
        <end position="173"/>
    </location>
</feature>
<feature type="splice variant" id="VSP_046628" description="In isoform e." evidence="14">
    <location>
        <begin position="1"/>
        <end position="509"/>
    </location>
</feature>
<feature type="splice variant" id="VSP_046629" description="In isoform b." evidence="14">
    <original>MAQVKAEYDFQSQPNTGELSISAGEVLTVIRENIDGGWIEGRNVRGSVGLFPESYVTPYQASRPPP</original>
    <variation>MLFTSSLRKAVENYPTPPGGSSEDAHRQLLERRRKQMLRRHTCSTLIKQDTSASPHKMKPPILMEEEDEQHSTGKHSSRKSSFKKSGAISKS</variation>
    <location>
        <begin position="1"/>
        <end position="66"/>
    </location>
</feature>
<feature type="splice variant" id="VSP_046630" description="In isoform f." evidence="14">
    <original>AQVKAEYDFQSQPNTGELSISAGEVLTVIRENIDGGWIEGRNVRGSVGLFPESYVTPYQASRPPPVLPPPLPPTSSGP</original>
    <variation>STDDETRSSQQDGAYPSSKRNGSVGSSTRSTSTKKRLSRQDSTARRRRLSEERDSRRRVEKSVSSCLSSNRSHHDQNK</variation>
    <location>
        <begin position="2"/>
        <end position="79"/>
    </location>
</feature>
<feature type="splice variant" id="VSP_046631" description="In isoform f." evidence="14">
    <location>
        <begin position="80"/>
        <end position="140"/>
    </location>
</feature>
<feature type="splice variant" id="VSP_046632" description="In isoform a." evidence="14">
    <original>EPTRPNVQSSIGSNSRRDLSRSH</original>
    <variation>VFLKFYFNFLIVQFLSVLFIPSN</variation>
    <location>
        <begin position="141"/>
        <end position="163"/>
    </location>
</feature>
<feature type="splice variant" id="VSP_046633" description="In isoform a." evidence="14">
    <location>
        <begin position="165"/>
        <end position="566"/>
    </location>
</feature>
<feature type="splice variant" id="VSP_046634" description="In isoform d." evidence="14">
    <location>
        <begin position="260"/>
        <end position="261"/>
    </location>
</feature>
<feature type="mutagenesis site" description="Defective recruitment to the phagosome." evidence="9">
    <original>RYK</original>
    <variation>QAA</variation>
    <location>
        <begin position="265"/>
        <end position="267"/>
    </location>
</feature>
<feature type="mutagenesis site" description="Defect recruitment by phosphoinositide to phagosomal surface." evidence="8">
    <original>R</original>
    <variation>Q</variation>
    <location>
        <position position="265"/>
    </location>
</feature>
<feature type="mutagenesis site" description="Defective recruitment to the phagosome." evidence="8">
    <original>K</original>
    <variation>E</variation>
    <location>
        <position position="494"/>
    </location>
</feature>
<feature type="mutagenesis site" description="Defective recruitment to the phagosome." evidence="8">
    <original>R</original>
    <variation>E</variation>
    <location>
        <position position="501"/>
    </location>
</feature>
<proteinExistence type="evidence at protein level"/>
<accession>Q8I4E2</accession>
<accession>D3NQ98</accession>
<accession>J7SA60</accession>
<accession>Q8I4E1</accession>
<accession>Q9XXG2</accession>
<accession>Q9XXG3</accession>
<dbReference type="EMBL" id="AL023835">
    <property type="protein sequence ID" value="CAA19486.1"/>
    <property type="molecule type" value="Genomic_DNA"/>
</dbReference>
<dbReference type="EMBL" id="AL023835">
    <property type="protein sequence ID" value="CAA19487.2"/>
    <property type="molecule type" value="Genomic_DNA"/>
</dbReference>
<dbReference type="EMBL" id="AL023835">
    <property type="protein sequence ID" value="CAD56253.1"/>
    <property type="molecule type" value="Genomic_DNA"/>
</dbReference>
<dbReference type="EMBL" id="AL023835">
    <property type="protein sequence ID" value="CAD56254.1"/>
    <property type="molecule type" value="Genomic_DNA"/>
</dbReference>
<dbReference type="EMBL" id="AL023835">
    <property type="protein sequence ID" value="CBK19491.1"/>
    <property type="molecule type" value="Genomic_DNA"/>
</dbReference>
<dbReference type="EMBL" id="AL023835">
    <property type="protein sequence ID" value="CCM09420.1"/>
    <property type="molecule type" value="Genomic_DNA"/>
</dbReference>
<dbReference type="RefSeq" id="NP_001255779.1">
    <molecule id="Q8I4E2-5"/>
    <property type="nucleotide sequence ID" value="NM_001268850.3"/>
</dbReference>
<dbReference type="RefSeq" id="NP_001263811.1">
    <property type="nucleotide sequence ID" value="NM_001276882.1"/>
</dbReference>
<dbReference type="RefSeq" id="NP_001379029.1">
    <molecule id="Q8I4E2-3"/>
    <property type="nucleotide sequence ID" value="NM_001392436.1"/>
</dbReference>
<dbReference type="RefSeq" id="NP_001379319.1">
    <molecule id="Q8I4E2-1"/>
    <property type="nucleotide sequence ID" value="NM_001392435.1"/>
</dbReference>
<dbReference type="RefSeq" id="NP_001380123.1">
    <molecule id="Q8I4E2-6"/>
    <property type="nucleotide sequence ID" value="NM_001392437.1"/>
</dbReference>
<dbReference type="RefSeq" id="NP_502693.2">
    <property type="nucleotide sequence ID" value="NM_070292.4"/>
</dbReference>
<dbReference type="RefSeq" id="NP_502694.1">
    <molecule id="Q8I4E2-2"/>
    <property type="nucleotide sequence ID" value="NM_070293.6"/>
</dbReference>
<dbReference type="RefSeq" id="NP_502695.2">
    <property type="nucleotide sequence ID" value="NM_070294.4"/>
</dbReference>
<dbReference type="RefSeq" id="NP_872090.1">
    <molecule id="Q8I4E2-4"/>
    <property type="nucleotide sequence ID" value="NM_182290.5"/>
</dbReference>
<dbReference type="SMR" id="Q8I4E2"/>
<dbReference type="BioGRID" id="43445">
    <property type="interactions" value="12"/>
</dbReference>
<dbReference type="FunCoup" id="Q8I4E2">
    <property type="interactions" value="2663"/>
</dbReference>
<dbReference type="IntAct" id="Q8I4E2">
    <property type="interactions" value="6"/>
</dbReference>
<dbReference type="STRING" id="6239.Y37A1B.2b.1"/>
<dbReference type="PaxDb" id="6239-Y37A1B.2b"/>
<dbReference type="PeptideAtlas" id="Q8I4E2"/>
<dbReference type="EnsemblMetazoa" id="Y37A1B.2a.1">
    <molecule id="Q8I4E2-2"/>
    <property type="protein sequence ID" value="Y37A1B.2a.1"/>
    <property type="gene ID" value="WBGene00003086"/>
</dbReference>
<dbReference type="EnsemblMetazoa" id="Y37A1B.2b.1">
    <molecule id="Q8I4E2-3"/>
    <property type="protein sequence ID" value="Y37A1B.2b.1"/>
    <property type="gene ID" value="WBGene00003086"/>
</dbReference>
<dbReference type="EnsemblMetazoa" id="Y37A1B.2c.1">
    <molecule id="Q8I4E2-1"/>
    <property type="protein sequence ID" value="Y37A1B.2c.1"/>
    <property type="gene ID" value="WBGene00003086"/>
</dbReference>
<dbReference type="EnsemblMetazoa" id="Y37A1B.2d.1">
    <molecule id="Q8I4E2-4"/>
    <property type="protein sequence ID" value="Y37A1B.2d.1"/>
    <property type="gene ID" value="WBGene00003086"/>
</dbReference>
<dbReference type="EnsemblMetazoa" id="Y37A1B.2e.1">
    <molecule id="Q8I4E2-5"/>
    <property type="protein sequence ID" value="Y37A1B.2e.1"/>
    <property type="gene ID" value="WBGene00003086"/>
</dbReference>
<dbReference type="EnsemblMetazoa" id="Y37A1B.2f.1">
    <molecule id="Q8I4E2-6"/>
    <property type="protein sequence ID" value="Y37A1B.2f.1"/>
    <property type="gene ID" value="WBGene00003086"/>
</dbReference>
<dbReference type="GeneID" id="178361"/>
<dbReference type="KEGG" id="cel:CELE_Y37A1B.2"/>
<dbReference type="UCSC" id="Y37A1B.2b">
    <property type="organism name" value="c. elegans"/>
</dbReference>
<dbReference type="AGR" id="WB:WBGene00003086"/>
<dbReference type="CTD" id="178361"/>
<dbReference type="WormBase" id="Y37A1B.2a">
    <molecule id="Q8I4E2-2"/>
    <property type="protein sequence ID" value="CE19071"/>
    <property type="gene ID" value="WBGene00003086"/>
    <property type="gene designation" value="lst-4"/>
</dbReference>
<dbReference type="WormBase" id="Y37A1B.2b">
    <molecule id="Q8I4E2-3"/>
    <property type="protein sequence ID" value="CE32245"/>
    <property type="gene ID" value="WBGene00003086"/>
    <property type="gene designation" value="lst-4"/>
</dbReference>
<dbReference type="WormBase" id="Y37A1B.2c">
    <molecule id="Q8I4E2-1"/>
    <property type="protein sequence ID" value="CE32246"/>
    <property type="gene ID" value="WBGene00003086"/>
    <property type="gene designation" value="lst-4"/>
</dbReference>
<dbReference type="WormBase" id="Y37A1B.2d">
    <molecule id="Q8I4E2-4"/>
    <property type="protein sequence ID" value="CE32247"/>
    <property type="gene ID" value="WBGene00003086"/>
    <property type="gene designation" value="lst-4"/>
</dbReference>
<dbReference type="WormBase" id="Y37A1B.2e">
    <molecule id="Q8I4E2-5"/>
    <property type="protein sequence ID" value="CE44602"/>
    <property type="gene ID" value="WBGene00003086"/>
    <property type="gene designation" value="lst-4"/>
</dbReference>
<dbReference type="WormBase" id="Y37A1B.2f">
    <molecule id="Q8I4E2-6"/>
    <property type="protein sequence ID" value="CE47745"/>
    <property type="gene ID" value="WBGene00003086"/>
    <property type="gene designation" value="lst-4"/>
</dbReference>
<dbReference type="eggNOG" id="KOG2528">
    <property type="taxonomic scope" value="Eukaryota"/>
</dbReference>
<dbReference type="GeneTree" id="ENSGT00940000166896"/>
<dbReference type="InParanoid" id="Q8I4E2"/>
<dbReference type="OMA" id="GWCEGFN"/>
<dbReference type="OrthoDB" id="10254720at2759"/>
<dbReference type="Reactome" id="R-CEL-432722">
    <property type="pathway name" value="Golgi Associated Vesicle Biogenesis"/>
</dbReference>
<dbReference type="Reactome" id="R-CEL-8856828">
    <property type="pathway name" value="Clathrin-mediated endocytosis"/>
</dbReference>
<dbReference type="SignaLink" id="Q8I4E2"/>
<dbReference type="PRO" id="PR:Q8I4E2"/>
<dbReference type="Proteomes" id="UP000001940">
    <property type="component" value="Chromosome IV"/>
</dbReference>
<dbReference type="Bgee" id="WBGene00003086">
    <property type="expression patterns" value="Expressed in germ line (C elegans) and 4 other cell types or tissues"/>
</dbReference>
<dbReference type="ExpressionAtlas" id="Q8I4E2">
    <property type="expression patterns" value="baseline and differential"/>
</dbReference>
<dbReference type="GO" id="GO:0005737">
    <property type="term" value="C:cytoplasm"/>
    <property type="evidence" value="ECO:0000314"/>
    <property type="project" value="WormBase"/>
</dbReference>
<dbReference type="GO" id="GO:0031410">
    <property type="term" value="C:cytoplasmic vesicle"/>
    <property type="evidence" value="ECO:0000318"/>
    <property type="project" value="GO_Central"/>
</dbReference>
<dbReference type="GO" id="GO:0032009">
    <property type="term" value="C:early phagosome"/>
    <property type="evidence" value="ECO:0000314"/>
    <property type="project" value="UniProtKB"/>
</dbReference>
<dbReference type="GO" id="GO:0045335">
    <property type="term" value="C:phagocytic vesicle"/>
    <property type="evidence" value="ECO:0000314"/>
    <property type="project" value="WormBase"/>
</dbReference>
<dbReference type="GO" id="GO:0030670">
    <property type="term" value="C:phagocytic vesicle membrane"/>
    <property type="evidence" value="ECO:0007669"/>
    <property type="project" value="UniProtKB-SubCell"/>
</dbReference>
<dbReference type="GO" id="GO:0005886">
    <property type="term" value="C:plasma membrane"/>
    <property type="evidence" value="ECO:0000318"/>
    <property type="project" value="GO_Central"/>
</dbReference>
<dbReference type="GO" id="GO:0051020">
    <property type="term" value="F:GTPase binding"/>
    <property type="evidence" value="ECO:0000353"/>
    <property type="project" value="WormBase"/>
</dbReference>
<dbReference type="GO" id="GO:0019902">
    <property type="term" value="F:phosphatase binding"/>
    <property type="evidence" value="ECO:0000353"/>
    <property type="project" value="WormBase"/>
</dbReference>
<dbReference type="GO" id="GO:0035091">
    <property type="term" value="F:phosphatidylinositol binding"/>
    <property type="evidence" value="ECO:0000314"/>
    <property type="project" value="UniProtKB"/>
</dbReference>
<dbReference type="GO" id="GO:0005547">
    <property type="term" value="F:phosphatidylinositol-3,4,5-trisphosphate binding"/>
    <property type="evidence" value="ECO:0000314"/>
    <property type="project" value="WormBase"/>
</dbReference>
<dbReference type="GO" id="GO:0005546">
    <property type="term" value="F:phosphatidylinositol-4,5-bisphosphate binding"/>
    <property type="evidence" value="ECO:0000314"/>
    <property type="project" value="WormBase"/>
</dbReference>
<dbReference type="GO" id="GO:0006897">
    <property type="term" value="P:endocytosis"/>
    <property type="evidence" value="ECO:0000318"/>
    <property type="project" value="GO_Central"/>
</dbReference>
<dbReference type="GO" id="GO:0016197">
    <property type="term" value="P:endosomal transport"/>
    <property type="evidence" value="ECO:0000318"/>
    <property type="project" value="GO_Central"/>
</dbReference>
<dbReference type="GO" id="GO:0097194">
    <property type="term" value="P:execution phase of apoptosis"/>
    <property type="evidence" value="ECO:0000315"/>
    <property type="project" value="UniProtKB"/>
</dbReference>
<dbReference type="GO" id="GO:0000278">
    <property type="term" value="P:mitotic cell cycle"/>
    <property type="evidence" value="ECO:0007669"/>
    <property type="project" value="InterPro"/>
</dbReference>
<dbReference type="GO" id="GO:0090387">
    <property type="term" value="P:phagolysosome assembly involved in apoptotic cell clearance"/>
    <property type="evidence" value="ECO:0000315"/>
    <property type="project" value="UniProtKB"/>
</dbReference>
<dbReference type="GO" id="GO:0090386">
    <property type="term" value="P:phagosome maturation involved in apoptotic cell clearance"/>
    <property type="evidence" value="ECO:0000315"/>
    <property type="project" value="UniProtKB"/>
</dbReference>
<dbReference type="GO" id="GO:0090389">
    <property type="term" value="P:phagosome-lysosome fusion involved in apoptotic cell clearance"/>
    <property type="evidence" value="ECO:0000315"/>
    <property type="project" value="WormBase"/>
</dbReference>
<dbReference type="GO" id="GO:0097320">
    <property type="term" value="P:plasma membrane tubulation"/>
    <property type="evidence" value="ECO:0000318"/>
    <property type="project" value="GO_Central"/>
</dbReference>
<dbReference type="GO" id="GO:0015031">
    <property type="term" value="P:protein transport"/>
    <property type="evidence" value="ECO:0007669"/>
    <property type="project" value="InterPro"/>
</dbReference>
<dbReference type="CDD" id="cd07626">
    <property type="entry name" value="BAR_SNX9_like"/>
    <property type="match status" value="1"/>
</dbReference>
<dbReference type="CDD" id="cd06862">
    <property type="entry name" value="PX_SNX9_18_like"/>
    <property type="match status" value="1"/>
</dbReference>
<dbReference type="CDD" id="cd11763">
    <property type="entry name" value="SH3_SNX9_like"/>
    <property type="match status" value="1"/>
</dbReference>
<dbReference type="FunFam" id="1.20.1270.60:FF:000033">
    <property type="entry name" value="Sorting nexin"/>
    <property type="match status" value="1"/>
</dbReference>
<dbReference type="FunFam" id="3.30.1520.10:FF:000004">
    <property type="entry name" value="Sorting nexin"/>
    <property type="match status" value="1"/>
</dbReference>
<dbReference type="Gene3D" id="1.20.1270.60">
    <property type="entry name" value="Arfaptin homology (AH) domain/BAR domain"/>
    <property type="match status" value="1"/>
</dbReference>
<dbReference type="Gene3D" id="3.30.1520.10">
    <property type="entry name" value="Phox-like domain"/>
    <property type="match status" value="1"/>
</dbReference>
<dbReference type="Gene3D" id="2.30.30.40">
    <property type="entry name" value="SH3 Domains"/>
    <property type="match status" value="1"/>
</dbReference>
<dbReference type="InterPro" id="IPR027267">
    <property type="entry name" value="AH/BAR_dom_sf"/>
</dbReference>
<dbReference type="InterPro" id="IPR001683">
    <property type="entry name" value="PX_dom"/>
</dbReference>
<dbReference type="InterPro" id="IPR036871">
    <property type="entry name" value="PX_dom_sf"/>
</dbReference>
<dbReference type="InterPro" id="IPR036028">
    <property type="entry name" value="SH3-like_dom_sf"/>
</dbReference>
<dbReference type="InterPro" id="IPR001452">
    <property type="entry name" value="SH3_domain"/>
</dbReference>
<dbReference type="InterPro" id="IPR014536">
    <property type="entry name" value="Snx9_fam"/>
</dbReference>
<dbReference type="InterPro" id="IPR019497">
    <property type="entry name" value="Sorting_nexin_WASP-bd-dom"/>
</dbReference>
<dbReference type="PANTHER" id="PTHR45827">
    <property type="entry name" value="SORTING NEXIN"/>
    <property type="match status" value="1"/>
</dbReference>
<dbReference type="PANTHER" id="PTHR45827:SF1">
    <property type="entry name" value="SORTING NEXIN"/>
    <property type="match status" value="1"/>
</dbReference>
<dbReference type="Pfam" id="PF10456">
    <property type="entry name" value="BAR_3_WASP_bdg"/>
    <property type="match status" value="1"/>
</dbReference>
<dbReference type="Pfam" id="PF00787">
    <property type="entry name" value="PX"/>
    <property type="match status" value="1"/>
</dbReference>
<dbReference type="Pfam" id="PF14604">
    <property type="entry name" value="SH3_9"/>
    <property type="match status" value="1"/>
</dbReference>
<dbReference type="PIRSF" id="PIRSF027744">
    <property type="entry name" value="Snx9"/>
    <property type="match status" value="1"/>
</dbReference>
<dbReference type="PRINTS" id="PR00452">
    <property type="entry name" value="SH3DOMAIN"/>
</dbReference>
<dbReference type="SMART" id="SM00312">
    <property type="entry name" value="PX"/>
    <property type="match status" value="1"/>
</dbReference>
<dbReference type="SMART" id="SM00326">
    <property type="entry name" value="SH3"/>
    <property type="match status" value="1"/>
</dbReference>
<dbReference type="SUPFAM" id="SSF64268">
    <property type="entry name" value="PX domain"/>
    <property type="match status" value="1"/>
</dbReference>
<dbReference type="SUPFAM" id="SSF50044">
    <property type="entry name" value="SH3-domain"/>
    <property type="match status" value="1"/>
</dbReference>
<dbReference type="PROSITE" id="PS50195">
    <property type="entry name" value="PX"/>
    <property type="match status" value="1"/>
</dbReference>
<dbReference type="PROSITE" id="PS50002">
    <property type="entry name" value="SH3"/>
    <property type="match status" value="1"/>
</dbReference>
<organism>
    <name type="scientific">Caenorhabditis elegans</name>
    <dbReference type="NCBI Taxonomy" id="6239"/>
    <lineage>
        <taxon>Eukaryota</taxon>
        <taxon>Metazoa</taxon>
        <taxon>Ecdysozoa</taxon>
        <taxon>Nematoda</taxon>
        <taxon>Chromadorea</taxon>
        <taxon>Rhabditida</taxon>
        <taxon>Rhabditina</taxon>
        <taxon>Rhabditomorpha</taxon>
        <taxon>Rhabditoidea</taxon>
        <taxon>Rhabditidae</taxon>
        <taxon>Peloderinae</taxon>
        <taxon>Caenorhabditis</taxon>
    </lineage>
</organism>